<evidence type="ECO:0000255" key="1">
    <source>
        <dbReference type="HAMAP-Rule" id="MF_01315"/>
    </source>
</evidence>
<evidence type="ECO:0000256" key="2">
    <source>
        <dbReference type="SAM" id="MobiDB-lite"/>
    </source>
</evidence>
<evidence type="ECO:0000305" key="3"/>
<reference key="1">
    <citation type="journal article" date="2007" name="PLoS Genet.">
        <title>Patterns and implications of gene gain and loss in the evolution of Prochlorococcus.</title>
        <authorList>
            <person name="Kettler G.C."/>
            <person name="Martiny A.C."/>
            <person name="Huang K."/>
            <person name="Zucker J."/>
            <person name="Coleman M.L."/>
            <person name="Rodrigue S."/>
            <person name="Chen F."/>
            <person name="Lapidus A."/>
            <person name="Ferriera S."/>
            <person name="Johnson J."/>
            <person name="Steglich C."/>
            <person name="Church G.M."/>
            <person name="Richardson P."/>
            <person name="Chisholm S.W."/>
        </authorList>
    </citation>
    <scope>NUCLEOTIDE SEQUENCE [LARGE SCALE GENOMIC DNA]</scope>
    <source>
        <strain>MIT 9301</strain>
    </source>
</reference>
<name>RS13_PROM0</name>
<sequence>MARIAGIDIPREKRVEIALTYVYGIGLTRSKLILANTGVNPDTRVKDLSDSDVQKLRGATEEFTLEGDLRRKEGMALKRLQDIGCVRGRRHRMSLPVRGQRTRTNARTRRGSRKTVAGRKK</sequence>
<accession>A3PF27</accession>
<gene>
    <name evidence="1" type="primary">rpsM</name>
    <name evidence="1" type="synonym">rps13</name>
    <name type="ordered locus">P9301_17291</name>
</gene>
<proteinExistence type="inferred from homology"/>
<keyword id="KW-1185">Reference proteome</keyword>
<keyword id="KW-0687">Ribonucleoprotein</keyword>
<keyword id="KW-0689">Ribosomal protein</keyword>
<keyword id="KW-0694">RNA-binding</keyword>
<keyword id="KW-0699">rRNA-binding</keyword>
<keyword id="KW-0820">tRNA-binding</keyword>
<comment type="function">
    <text evidence="1">Located at the top of the head of the 30S subunit, it contacts several helices of the 16S rRNA. In the 70S ribosome it contacts the 23S rRNA (bridge B1a) and protein L5 of the 50S subunit (bridge B1b), connecting the 2 subunits; these bridges are implicated in subunit movement. Contacts the tRNAs in the A and P-sites.</text>
</comment>
<comment type="subunit">
    <text evidence="1">Part of the 30S ribosomal subunit. Forms a loose heterodimer with protein S19. Forms two bridges to the 50S subunit in the 70S ribosome.</text>
</comment>
<comment type="similarity">
    <text evidence="1">Belongs to the universal ribosomal protein uS13 family.</text>
</comment>
<organism>
    <name type="scientific">Prochlorococcus marinus (strain MIT 9301)</name>
    <dbReference type="NCBI Taxonomy" id="167546"/>
    <lineage>
        <taxon>Bacteria</taxon>
        <taxon>Bacillati</taxon>
        <taxon>Cyanobacteriota</taxon>
        <taxon>Cyanophyceae</taxon>
        <taxon>Synechococcales</taxon>
        <taxon>Prochlorococcaceae</taxon>
        <taxon>Prochlorococcus</taxon>
    </lineage>
</organism>
<dbReference type="EMBL" id="CP000576">
    <property type="protein sequence ID" value="ABO18352.1"/>
    <property type="molecule type" value="Genomic_DNA"/>
</dbReference>
<dbReference type="RefSeq" id="WP_002807728.1">
    <property type="nucleotide sequence ID" value="NC_009091.1"/>
</dbReference>
<dbReference type="SMR" id="A3PF27"/>
<dbReference type="STRING" id="167546.P9301_17291"/>
<dbReference type="KEGG" id="pmg:P9301_17291"/>
<dbReference type="eggNOG" id="COG0099">
    <property type="taxonomic scope" value="Bacteria"/>
</dbReference>
<dbReference type="HOGENOM" id="CLU_103849_1_2_3"/>
<dbReference type="OrthoDB" id="9803610at2"/>
<dbReference type="Proteomes" id="UP000001430">
    <property type="component" value="Chromosome"/>
</dbReference>
<dbReference type="GO" id="GO:0005829">
    <property type="term" value="C:cytosol"/>
    <property type="evidence" value="ECO:0007669"/>
    <property type="project" value="TreeGrafter"/>
</dbReference>
<dbReference type="GO" id="GO:0015935">
    <property type="term" value="C:small ribosomal subunit"/>
    <property type="evidence" value="ECO:0007669"/>
    <property type="project" value="TreeGrafter"/>
</dbReference>
<dbReference type="GO" id="GO:0019843">
    <property type="term" value="F:rRNA binding"/>
    <property type="evidence" value="ECO:0007669"/>
    <property type="project" value="UniProtKB-UniRule"/>
</dbReference>
<dbReference type="GO" id="GO:0003735">
    <property type="term" value="F:structural constituent of ribosome"/>
    <property type="evidence" value="ECO:0007669"/>
    <property type="project" value="InterPro"/>
</dbReference>
<dbReference type="GO" id="GO:0000049">
    <property type="term" value="F:tRNA binding"/>
    <property type="evidence" value="ECO:0007669"/>
    <property type="project" value="UniProtKB-UniRule"/>
</dbReference>
<dbReference type="GO" id="GO:0006412">
    <property type="term" value="P:translation"/>
    <property type="evidence" value="ECO:0007669"/>
    <property type="project" value="UniProtKB-UniRule"/>
</dbReference>
<dbReference type="FunFam" id="1.10.8.50:FF:000001">
    <property type="entry name" value="30S ribosomal protein S13"/>
    <property type="match status" value="1"/>
</dbReference>
<dbReference type="Gene3D" id="1.10.8.50">
    <property type="match status" value="1"/>
</dbReference>
<dbReference type="Gene3D" id="4.10.910.10">
    <property type="entry name" value="30s ribosomal protein s13, domain 2"/>
    <property type="match status" value="1"/>
</dbReference>
<dbReference type="HAMAP" id="MF_01315">
    <property type="entry name" value="Ribosomal_uS13"/>
    <property type="match status" value="1"/>
</dbReference>
<dbReference type="InterPro" id="IPR027437">
    <property type="entry name" value="Rbsml_uS13_C"/>
</dbReference>
<dbReference type="InterPro" id="IPR001892">
    <property type="entry name" value="Ribosomal_uS13"/>
</dbReference>
<dbReference type="InterPro" id="IPR010979">
    <property type="entry name" value="Ribosomal_uS13-like_H2TH"/>
</dbReference>
<dbReference type="InterPro" id="IPR019980">
    <property type="entry name" value="Ribosomal_uS13_bac-type"/>
</dbReference>
<dbReference type="InterPro" id="IPR018269">
    <property type="entry name" value="Ribosomal_uS13_CS"/>
</dbReference>
<dbReference type="NCBIfam" id="TIGR03631">
    <property type="entry name" value="uS13_bact"/>
    <property type="match status" value="1"/>
</dbReference>
<dbReference type="PANTHER" id="PTHR10871">
    <property type="entry name" value="30S RIBOSOMAL PROTEIN S13/40S RIBOSOMAL PROTEIN S18"/>
    <property type="match status" value="1"/>
</dbReference>
<dbReference type="PANTHER" id="PTHR10871:SF1">
    <property type="entry name" value="SMALL RIBOSOMAL SUBUNIT PROTEIN US13M"/>
    <property type="match status" value="1"/>
</dbReference>
<dbReference type="Pfam" id="PF00416">
    <property type="entry name" value="Ribosomal_S13"/>
    <property type="match status" value="1"/>
</dbReference>
<dbReference type="PIRSF" id="PIRSF002134">
    <property type="entry name" value="Ribosomal_S13"/>
    <property type="match status" value="1"/>
</dbReference>
<dbReference type="SUPFAM" id="SSF46946">
    <property type="entry name" value="S13-like H2TH domain"/>
    <property type="match status" value="1"/>
</dbReference>
<dbReference type="PROSITE" id="PS00646">
    <property type="entry name" value="RIBOSOMAL_S13_1"/>
    <property type="match status" value="1"/>
</dbReference>
<dbReference type="PROSITE" id="PS50159">
    <property type="entry name" value="RIBOSOMAL_S13_2"/>
    <property type="match status" value="1"/>
</dbReference>
<protein>
    <recommendedName>
        <fullName evidence="1">Small ribosomal subunit protein uS13</fullName>
    </recommendedName>
    <alternativeName>
        <fullName evidence="3">30S ribosomal protein S13</fullName>
    </alternativeName>
</protein>
<feature type="chain" id="PRO_0000306675" description="Small ribosomal subunit protein uS13">
    <location>
        <begin position="1"/>
        <end position="121"/>
    </location>
</feature>
<feature type="region of interest" description="Disordered" evidence="2">
    <location>
        <begin position="91"/>
        <end position="121"/>
    </location>
</feature>
<feature type="compositionally biased region" description="Basic residues" evidence="2">
    <location>
        <begin position="100"/>
        <end position="121"/>
    </location>
</feature>